<accession>G3XD67</accession>
<accession>Q7DCD3</accession>
<accession>Q9REV9</accession>
<reference evidence="9 10" key="1">
    <citation type="journal article" date="2000" name="J. Bacteriol.">
        <title>Transcriptional control of the hydrogen cyanide biosynthetic genes hcnABC by the anaerobic regulator ANR and the quorum-sensing regulators LasR and RhlR in Pseudomonas aeruginosa.</title>
        <authorList>
            <person name="Pessi G."/>
            <person name="Haas D."/>
        </authorList>
    </citation>
    <scope>NUCLEOTIDE SEQUENCE [GENOMIC DNA]</scope>
    <scope>FUNCTION</scope>
    <scope>INDUCTION</scope>
    <source>
        <strain evidence="10">ATCC 15692 / DSM 22644 / CIP 104116 / JCM 14847 / LMG 12228 / 1C / PRS 101 / PAO1</strain>
    </source>
</reference>
<reference evidence="11" key="2">
    <citation type="journal article" date="2000" name="Nature">
        <title>Complete genome sequence of Pseudomonas aeruginosa PAO1, an opportunistic pathogen.</title>
        <authorList>
            <person name="Stover C.K."/>
            <person name="Pham X.-Q.T."/>
            <person name="Erwin A.L."/>
            <person name="Mizoguchi S.D."/>
            <person name="Warrener P."/>
            <person name="Hickey M.J."/>
            <person name="Brinkman F.S.L."/>
            <person name="Hufnagle W.O."/>
            <person name="Kowalik D.J."/>
            <person name="Lagrou M."/>
            <person name="Garber R.L."/>
            <person name="Goltry L."/>
            <person name="Tolentino E."/>
            <person name="Westbrock-Wadman S."/>
            <person name="Yuan Y."/>
            <person name="Brody L.L."/>
            <person name="Coulter S.N."/>
            <person name="Folger K.R."/>
            <person name="Kas A."/>
            <person name="Larbig K."/>
            <person name="Lim R.M."/>
            <person name="Smith K.A."/>
            <person name="Spencer D.H."/>
            <person name="Wong G.K.-S."/>
            <person name="Wu Z."/>
            <person name="Paulsen I.T."/>
            <person name="Reizer J."/>
            <person name="Saier M.H. Jr."/>
            <person name="Hancock R.E.W."/>
            <person name="Lory S."/>
            <person name="Olson M.V."/>
        </authorList>
    </citation>
    <scope>NUCLEOTIDE SEQUENCE [LARGE SCALE GENOMIC DNA]</scope>
    <source>
        <strain>ATCC 15692 / DSM 22644 / CIP 104116 / JCM 14847 / LMG 12228 / 1C / PRS 101 / PAO1</strain>
    </source>
</reference>
<reference evidence="9" key="3">
    <citation type="journal article" date="1968" name="Physiol. Plantarum">
        <title>Growth curves and pH optima for cyanide producing bacteria.</title>
        <authorList>
            <person name="Wissing F."/>
        </authorList>
    </citation>
    <scope>ACTIVITY REGULATION</scope>
    <scope>BIOPHYSICOCHEMICAL PROPERTIES</scope>
</reference>
<reference evidence="9" key="4">
    <citation type="journal article" date="1974" name="J. Bacteriol.">
        <title>Cyanide formation from oxidation of glycine of Pseudomonas species.</title>
        <authorList>
            <person name="Wissing F."/>
        </authorList>
    </citation>
    <scope>FUNCTION</scope>
    <scope>ACTIVITY REGULATION</scope>
    <scope>BIOPHYSICOCHEMICAL PROPERTIES</scope>
    <source>
        <strain evidence="6">C</strain>
    </source>
</reference>
<reference evidence="9" key="5">
    <citation type="journal article" date="1975" name="J. Bacteriol.">
        <title>Cyanide production from glycine by a homogenate from a Pseudomonas species.</title>
        <authorList>
            <person name="Wissing F."/>
        </authorList>
    </citation>
    <scope>BIOPHYSICOCHEMICAL PROPERTIES</scope>
    <scope>SUBCELLULAR LOCATION</scope>
</reference>
<reference evidence="9" key="6">
    <citation type="journal article" date="1977" name="J. Bacteriol.">
        <title>Glycine metabolism by Pseudomonas aeruginosa: hydrogen cyanide biosynthesis.</title>
        <authorList>
            <person name="Castric P.A."/>
        </authorList>
    </citation>
    <scope>FUNCTION</scope>
    <scope>CATALYTIC ACTIVITY</scope>
    <source>
        <strain evidence="4">9-D2</strain>
    </source>
</reference>
<reference evidence="9" key="7">
    <citation type="journal article" date="2000" name="Arch. Microbiol.">
        <title>Mechanism, regulation, and ecological role of bacterial cyanide biosynthesis.</title>
        <authorList>
            <person name="Blumer C."/>
            <person name="Haas D."/>
        </authorList>
    </citation>
    <scope>FUNCTION</scope>
    <scope>CATALYTIC ACTIVITY</scope>
</reference>
<protein>
    <recommendedName>
        <fullName evidence="11">Hydrogen cyanide synthase subunit HcnA</fullName>
        <shortName evidence="8">HcnA</shortName>
        <ecNumber evidence="2 4">1.4.99.5</ecNumber>
    </recommendedName>
    <alternativeName>
        <fullName evidence="8">Glycine dehydrogenase (cyanide-forming)</fullName>
    </alternativeName>
</protein>
<proteinExistence type="evidence at protein level"/>
<dbReference type="EC" id="1.4.99.5" evidence="2 4"/>
<dbReference type="EMBL" id="AF208523">
    <property type="protein sequence ID" value="AAF21028.1"/>
    <property type="molecule type" value="Genomic_DNA"/>
</dbReference>
<dbReference type="EMBL" id="AE004091">
    <property type="protein sequence ID" value="AAG05581.1"/>
    <property type="molecule type" value="Genomic_DNA"/>
</dbReference>
<dbReference type="PIR" id="F83370">
    <property type="entry name" value="F83370"/>
</dbReference>
<dbReference type="RefSeq" id="NP_250883.1">
    <property type="nucleotide sequence ID" value="NC_002516.2"/>
</dbReference>
<dbReference type="RefSeq" id="WP_003113684.1">
    <property type="nucleotide sequence ID" value="NZ_QZGE01000014.1"/>
</dbReference>
<dbReference type="SMR" id="G3XD67"/>
<dbReference type="STRING" id="208964.PA2193"/>
<dbReference type="PaxDb" id="208964-PA2193"/>
<dbReference type="DNASU" id="882197"/>
<dbReference type="GeneID" id="882197"/>
<dbReference type="KEGG" id="pae:PA2193"/>
<dbReference type="PATRIC" id="fig|208964.12.peg.2297"/>
<dbReference type="PseudoCAP" id="PA2193"/>
<dbReference type="HOGENOM" id="CLU_153062_2_0_6"/>
<dbReference type="InParanoid" id="G3XD67"/>
<dbReference type="OrthoDB" id="573392at2"/>
<dbReference type="PhylomeDB" id="G3XD67"/>
<dbReference type="BioCyc" id="PAER208964:G1FZ6-2233-MONOMER"/>
<dbReference type="Proteomes" id="UP000002438">
    <property type="component" value="Chromosome"/>
</dbReference>
<dbReference type="GO" id="GO:0005886">
    <property type="term" value="C:plasma membrane"/>
    <property type="evidence" value="ECO:0007669"/>
    <property type="project" value="UniProtKB-SubCell"/>
</dbReference>
<dbReference type="GO" id="GO:0051537">
    <property type="term" value="F:2 iron, 2 sulfur cluster binding"/>
    <property type="evidence" value="ECO:0007669"/>
    <property type="project" value="UniProtKB-KW"/>
</dbReference>
<dbReference type="GO" id="GO:0050622">
    <property type="term" value="F:glycine dehydrogenase (cyanide-forming) activity"/>
    <property type="evidence" value="ECO:0007669"/>
    <property type="project" value="UniProtKB-EC"/>
</dbReference>
<dbReference type="GO" id="GO:0046872">
    <property type="term" value="F:metal ion binding"/>
    <property type="evidence" value="ECO:0007669"/>
    <property type="project" value="UniProtKB-KW"/>
</dbReference>
<dbReference type="CDD" id="cd00207">
    <property type="entry name" value="fer2"/>
    <property type="match status" value="1"/>
</dbReference>
<dbReference type="Gene3D" id="3.10.20.440">
    <property type="entry name" value="2Fe-2S iron-sulphur cluster binding domain, sarcosine oxidase, alpha subunit, N-terminal domain"/>
    <property type="match status" value="1"/>
</dbReference>
<dbReference type="InterPro" id="IPR042204">
    <property type="entry name" value="2Fe-2S-bd_N"/>
</dbReference>
<dbReference type="InterPro" id="IPR036010">
    <property type="entry name" value="2Fe-2S_ferredoxin-like_sf"/>
</dbReference>
<dbReference type="InterPro" id="IPR001041">
    <property type="entry name" value="2Fe-2S_ferredoxin-type"/>
</dbReference>
<dbReference type="Pfam" id="PF13510">
    <property type="entry name" value="Fer2_4"/>
    <property type="match status" value="1"/>
</dbReference>
<dbReference type="SUPFAM" id="SSF54292">
    <property type="entry name" value="2Fe-2S ferredoxin-like"/>
    <property type="match status" value="1"/>
</dbReference>
<dbReference type="PROSITE" id="PS51085">
    <property type="entry name" value="2FE2S_FER_2"/>
    <property type="match status" value="1"/>
</dbReference>
<organism>
    <name type="scientific">Pseudomonas aeruginosa (strain ATCC 15692 / DSM 22644 / CIP 104116 / JCM 14847 / LMG 12228 / 1C / PRS 101 / PAO1)</name>
    <dbReference type="NCBI Taxonomy" id="208964"/>
    <lineage>
        <taxon>Bacteria</taxon>
        <taxon>Pseudomonadati</taxon>
        <taxon>Pseudomonadota</taxon>
        <taxon>Gammaproteobacteria</taxon>
        <taxon>Pseudomonadales</taxon>
        <taxon>Pseudomonadaceae</taxon>
        <taxon>Pseudomonas</taxon>
    </lineage>
</organism>
<comment type="function">
    <text evidence="2 3 4 6">A three-component membrane-bound flavoenzyme that catalyzes the formation of hydrogen cyanide, a secondary metabolite, by transfer of electrons to a cyanide-resistant branch of the aerobic respiratory chain.</text>
</comment>
<comment type="catalytic activity">
    <reaction evidence="2 4">
        <text>glycine + 2 A = hydrogen cyanide + 2 AH2 + CO2</text>
        <dbReference type="Rhea" id="RHEA:15821"/>
        <dbReference type="ChEBI" id="CHEBI:13193"/>
        <dbReference type="ChEBI" id="CHEBI:16526"/>
        <dbReference type="ChEBI" id="CHEBI:17499"/>
        <dbReference type="ChEBI" id="CHEBI:18407"/>
        <dbReference type="ChEBI" id="CHEBI:57305"/>
        <dbReference type="EC" id="1.4.99.5"/>
    </reaction>
</comment>
<comment type="activity regulation">
    <text evidence="6 7">Oxygen is necessary for cyanogenesis. Activated by succinate, glycine methyl ester, glucose and D,L-methionine in addition to glycine. Phenazine methosulfate, methylene blue, 2,6-dichlorophenolindophenol (DCIP) and ferricyanide can replace oxygen for the reaction. Inhibited by pyrrolnitrin and acriflavine at 1 mM concentration.</text>
</comment>
<comment type="biophysicochemical properties">
    <kinetics>
        <KM evidence="5 6 7">50 mM for glycine</KM>
        <text evidence="6">Measured for the whole complex.</text>
    </kinetics>
    <phDependence>
        <text evidence="5 6 7">Optimum pH is 8.3 (in the presence of Tris-HCl). Active from 7.3-7.8 in the presence of other buffers.</text>
    </phDependence>
    <temperatureDependence>
        <text evidence="5 6 7">Not stable at 0 degrees Celsius. Decrease in activity up to 40% immediately after freeze-drying procedure, with a further decrease up to 10% when stored at -10 degrees Celsius.</text>
    </temperatureDependence>
</comment>
<comment type="subunit">
    <text evidence="9">Heterotrimer of HcnA, HcnB and HcnC.</text>
</comment>
<comment type="subcellular location">
    <subcellularLocation>
        <location evidence="5">Cell membrane</location>
    </subcellularLocation>
</comment>
<comment type="induction">
    <text evidence="3">Reduced oxygen levels.</text>
</comment>
<keyword id="KW-0001">2Fe-2S</keyword>
<keyword id="KW-1003">Cell membrane</keyword>
<keyword id="KW-0408">Iron</keyword>
<keyword id="KW-0411">Iron-sulfur</keyword>
<keyword id="KW-0472">Membrane</keyword>
<keyword id="KW-0479">Metal-binding</keyword>
<keyword id="KW-0560">Oxidoreductase</keyword>
<keyword id="KW-1185">Reference proteome</keyword>
<feature type="chain" id="PRO_0000419809" description="Hydrogen cyanide synthase subunit HcnA">
    <location>
        <begin position="1"/>
        <end position="104"/>
    </location>
</feature>
<feature type="domain" description="2Fe-2S ferredoxin-type" evidence="1">
    <location>
        <begin position="16"/>
        <end position="97"/>
    </location>
</feature>
<feature type="binding site" evidence="1">
    <location>
        <position position="60"/>
    </location>
    <ligand>
        <name>[2Fe-2S] cluster</name>
        <dbReference type="ChEBI" id="CHEBI:190135"/>
    </ligand>
</feature>
<feature type="binding site" evidence="1">
    <location>
        <position position="65"/>
    </location>
    <ligand>
        <name>[2Fe-2S] cluster</name>
        <dbReference type="ChEBI" id="CHEBI:190135"/>
    </ligand>
</feature>
<feature type="binding site" evidence="1">
    <location>
        <position position="68"/>
    </location>
    <ligand>
        <name>[2Fe-2S] cluster</name>
        <dbReference type="ChEBI" id="CHEBI:190135"/>
    </ligand>
</feature>
<feature type="binding site" evidence="1">
    <location>
        <position position="81"/>
    </location>
    <ligand>
        <name>[2Fe-2S] cluster</name>
        <dbReference type="ChEBI" id="CHEBI:190135"/>
    </ligand>
</feature>
<name>HCNA_PSEAE</name>
<gene>
    <name evidence="11" type="primary">hcnA</name>
    <name type="ordered locus">PA2193</name>
</gene>
<sequence>MHLLERQHDIQPLSRADMTIHLNGQPVAAAAGETVLNVLNAVGLRRLARNDHGQASGAFCGMGVCHCCLVAIDGRPKRRACQTVVRPGMRVETESNRFDQEERP</sequence>
<evidence type="ECO:0000255" key="1">
    <source>
        <dbReference type="PROSITE-ProRule" id="PRU00465"/>
    </source>
</evidence>
<evidence type="ECO:0000269" key="2">
    <source>
    </source>
</evidence>
<evidence type="ECO:0000269" key="3">
    <source>
    </source>
</evidence>
<evidence type="ECO:0000269" key="4">
    <source>
    </source>
</evidence>
<evidence type="ECO:0000269" key="5">
    <source>
    </source>
</evidence>
<evidence type="ECO:0000269" key="6">
    <source>
    </source>
</evidence>
<evidence type="ECO:0000269" key="7">
    <source ref="3"/>
</evidence>
<evidence type="ECO:0000303" key="8">
    <source>
    </source>
</evidence>
<evidence type="ECO:0000305" key="9"/>
<evidence type="ECO:0000312" key="10">
    <source>
        <dbReference type="EMBL" id="AAF21028.1"/>
    </source>
</evidence>
<evidence type="ECO:0000312" key="11">
    <source>
        <dbReference type="EMBL" id="AAG05581.1"/>
    </source>
</evidence>